<gene>
    <name evidence="1" type="primary">rpoA</name>
    <name type="ordered locus">CTLon_0764</name>
</gene>
<evidence type="ECO:0000255" key="1">
    <source>
        <dbReference type="HAMAP-Rule" id="MF_00059"/>
    </source>
</evidence>
<dbReference type="EC" id="2.7.7.6" evidence="1"/>
<dbReference type="EMBL" id="AM884177">
    <property type="protein sequence ID" value="CAP07161.1"/>
    <property type="molecule type" value="Genomic_DNA"/>
</dbReference>
<dbReference type="RefSeq" id="WP_009873864.1">
    <property type="nucleotide sequence ID" value="NC_010280.2"/>
</dbReference>
<dbReference type="SMR" id="B0BCE6"/>
<dbReference type="KEGG" id="ctl:CTLon_0764"/>
<dbReference type="HOGENOM" id="CLU_053084_0_1_0"/>
<dbReference type="Proteomes" id="UP001154401">
    <property type="component" value="Chromosome"/>
</dbReference>
<dbReference type="GO" id="GO:0005737">
    <property type="term" value="C:cytoplasm"/>
    <property type="evidence" value="ECO:0007669"/>
    <property type="project" value="UniProtKB-ARBA"/>
</dbReference>
<dbReference type="GO" id="GO:0000428">
    <property type="term" value="C:DNA-directed RNA polymerase complex"/>
    <property type="evidence" value="ECO:0007669"/>
    <property type="project" value="UniProtKB-KW"/>
</dbReference>
<dbReference type="GO" id="GO:0003677">
    <property type="term" value="F:DNA binding"/>
    <property type="evidence" value="ECO:0007669"/>
    <property type="project" value="UniProtKB-UniRule"/>
</dbReference>
<dbReference type="GO" id="GO:0003899">
    <property type="term" value="F:DNA-directed RNA polymerase activity"/>
    <property type="evidence" value="ECO:0007669"/>
    <property type="project" value="UniProtKB-UniRule"/>
</dbReference>
<dbReference type="GO" id="GO:0046983">
    <property type="term" value="F:protein dimerization activity"/>
    <property type="evidence" value="ECO:0007669"/>
    <property type="project" value="InterPro"/>
</dbReference>
<dbReference type="GO" id="GO:0006351">
    <property type="term" value="P:DNA-templated transcription"/>
    <property type="evidence" value="ECO:0007669"/>
    <property type="project" value="UniProtKB-UniRule"/>
</dbReference>
<dbReference type="CDD" id="cd06928">
    <property type="entry name" value="RNAP_alpha_NTD"/>
    <property type="match status" value="1"/>
</dbReference>
<dbReference type="FunFam" id="1.10.150.20:FF:000078">
    <property type="entry name" value="DNA-directed RNA polymerase subunit alpha"/>
    <property type="match status" value="1"/>
</dbReference>
<dbReference type="FunFam" id="2.170.120.12:FF:000014">
    <property type="entry name" value="DNA-directed RNA polymerase subunit alpha"/>
    <property type="match status" value="1"/>
</dbReference>
<dbReference type="Gene3D" id="1.10.150.20">
    <property type="entry name" value="5' to 3' exonuclease, C-terminal subdomain"/>
    <property type="match status" value="1"/>
</dbReference>
<dbReference type="Gene3D" id="2.170.120.12">
    <property type="entry name" value="DNA-directed RNA polymerase, insert domain"/>
    <property type="match status" value="1"/>
</dbReference>
<dbReference type="Gene3D" id="3.30.1360.10">
    <property type="entry name" value="RNA polymerase, RBP11-like subunit"/>
    <property type="match status" value="1"/>
</dbReference>
<dbReference type="HAMAP" id="MF_00059">
    <property type="entry name" value="RNApol_bact_RpoA"/>
    <property type="match status" value="1"/>
</dbReference>
<dbReference type="InterPro" id="IPR011262">
    <property type="entry name" value="DNA-dir_RNA_pol_insert"/>
</dbReference>
<dbReference type="InterPro" id="IPR011263">
    <property type="entry name" value="DNA-dir_RNA_pol_RpoA/D/Rpb3"/>
</dbReference>
<dbReference type="InterPro" id="IPR011773">
    <property type="entry name" value="DNA-dir_RpoA"/>
</dbReference>
<dbReference type="InterPro" id="IPR036603">
    <property type="entry name" value="RBP11-like"/>
</dbReference>
<dbReference type="InterPro" id="IPR011260">
    <property type="entry name" value="RNAP_asu_C"/>
</dbReference>
<dbReference type="InterPro" id="IPR036643">
    <property type="entry name" value="RNApol_insert_sf"/>
</dbReference>
<dbReference type="NCBIfam" id="NF003513">
    <property type="entry name" value="PRK05182.1-2"/>
    <property type="match status" value="1"/>
</dbReference>
<dbReference type="NCBIfam" id="NF003517">
    <property type="entry name" value="PRK05182.2-3"/>
    <property type="match status" value="1"/>
</dbReference>
<dbReference type="NCBIfam" id="NF003519">
    <property type="entry name" value="PRK05182.2-5"/>
    <property type="match status" value="1"/>
</dbReference>
<dbReference type="NCBIfam" id="TIGR02027">
    <property type="entry name" value="rpoA"/>
    <property type="match status" value="1"/>
</dbReference>
<dbReference type="Pfam" id="PF01000">
    <property type="entry name" value="RNA_pol_A_bac"/>
    <property type="match status" value="1"/>
</dbReference>
<dbReference type="Pfam" id="PF03118">
    <property type="entry name" value="RNA_pol_A_CTD"/>
    <property type="match status" value="1"/>
</dbReference>
<dbReference type="Pfam" id="PF01193">
    <property type="entry name" value="RNA_pol_L"/>
    <property type="match status" value="1"/>
</dbReference>
<dbReference type="SMART" id="SM00662">
    <property type="entry name" value="RPOLD"/>
    <property type="match status" value="1"/>
</dbReference>
<dbReference type="SUPFAM" id="SSF47789">
    <property type="entry name" value="C-terminal domain of RNA polymerase alpha subunit"/>
    <property type="match status" value="1"/>
</dbReference>
<dbReference type="SUPFAM" id="SSF56553">
    <property type="entry name" value="Insert subdomain of RNA polymerase alpha subunit"/>
    <property type="match status" value="1"/>
</dbReference>
<dbReference type="SUPFAM" id="SSF55257">
    <property type="entry name" value="RBP11-like subunits of RNA polymerase"/>
    <property type="match status" value="1"/>
</dbReference>
<proteinExistence type="inferred from homology"/>
<protein>
    <recommendedName>
        <fullName evidence="1">DNA-directed RNA polymerase subunit alpha</fullName>
        <shortName evidence="1">RNAP subunit alpha</shortName>
        <ecNumber evidence="1">2.7.7.6</ecNumber>
    </recommendedName>
    <alternativeName>
        <fullName evidence="1">RNA polymerase subunit alpha</fullName>
    </alternativeName>
    <alternativeName>
        <fullName evidence="1">Transcriptase subunit alpha</fullName>
    </alternativeName>
</protein>
<comment type="function">
    <text evidence="1">DNA-dependent RNA polymerase catalyzes the transcription of DNA into RNA using the four ribonucleoside triphosphates as substrates.</text>
</comment>
<comment type="catalytic activity">
    <reaction evidence="1">
        <text>RNA(n) + a ribonucleoside 5'-triphosphate = RNA(n+1) + diphosphate</text>
        <dbReference type="Rhea" id="RHEA:21248"/>
        <dbReference type="Rhea" id="RHEA-COMP:14527"/>
        <dbReference type="Rhea" id="RHEA-COMP:17342"/>
        <dbReference type="ChEBI" id="CHEBI:33019"/>
        <dbReference type="ChEBI" id="CHEBI:61557"/>
        <dbReference type="ChEBI" id="CHEBI:140395"/>
        <dbReference type="EC" id="2.7.7.6"/>
    </reaction>
</comment>
<comment type="subunit">
    <text evidence="1">Homodimer. The RNAP catalytic core consists of 2 alpha, 1 beta, 1 beta' and 1 omega subunit. When a sigma factor is associated with the core the holoenzyme is formed, which can initiate transcription.</text>
</comment>
<comment type="domain">
    <text evidence="1">The N-terminal domain is essential for RNAP assembly and basal transcription, whereas the C-terminal domain is involved in interaction with transcriptional regulators and with upstream promoter elements.</text>
</comment>
<comment type="similarity">
    <text evidence="1">Belongs to the RNA polymerase alpha chain family.</text>
</comment>
<keyword id="KW-0240">DNA-directed RNA polymerase</keyword>
<keyword id="KW-0548">Nucleotidyltransferase</keyword>
<keyword id="KW-0804">Transcription</keyword>
<keyword id="KW-0808">Transferase</keyword>
<organism>
    <name type="scientific">Chlamydia trachomatis serovar L2b (strain UCH-1/proctitis)</name>
    <dbReference type="NCBI Taxonomy" id="471473"/>
    <lineage>
        <taxon>Bacteria</taxon>
        <taxon>Pseudomonadati</taxon>
        <taxon>Chlamydiota</taxon>
        <taxon>Chlamydiia</taxon>
        <taxon>Chlamydiales</taxon>
        <taxon>Chlamydiaceae</taxon>
        <taxon>Chlamydia/Chlamydophila group</taxon>
        <taxon>Chlamydia</taxon>
    </lineage>
</organism>
<name>RPOA_CHLTB</name>
<sequence>MSDSSHNLLYNKFELPESVKMSPVEGAVGGIDKVARFVADPLEKGMGHTLGSALRRALLIGLEAPAIVSFSMTGVLHEYMAVEGIIEDVTNIVLNLKGSLLKKYPLQDCEGGRCSQKLRATISVDASDLAAAGGQKEVTLGDLLQEGTFEAVNPEHVIFTVTRPMQLEVMLRVAFGRGYSPSERIVLEERGMNEIVLDAAFSPVVLVNYFVEDTRVGQDTDFDRLVLQVETDGRVAPKEAVAFATQILSKHFSVFEKMDEKRIVFEEAISVEKENKDDILHKLVLGINEIELSVRSTNCLSNANIETIGELVIMPEPRLLQFRNFGKKSLCEIKNKLKEMKLELGMDLSQFGVGLDNVKEKMKWYAEKIRSSKNTKG</sequence>
<reference key="1">
    <citation type="journal article" date="2008" name="Genome Res.">
        <title>Chlamydia trachomatis: genome sequence analysis of lymphogranuloma venereum isolates.</title>
        <authorList>
            <person name="Thomson N.R."/>
            <person name="Holden M.T.G."/>
            <person name="Carder C."/>
            <person name="Lennard N."/>
            <person name="Lockey S.J."/>
            <person name="Marsh P."/>
            <person name="Skipp P."/>
            <person name="O'Connor C.D."/>
            <person name="Goodhead I."/>
            <person name="Norbertzcak H."/>
            <person name="Harris B."/>
            <person name="Ormond D."/>
            <person name="Rance R."/>
            <person name="Quail M.A."/>
            <person name="Parkhill J."/>
            <person name="Stephens R.S."/>
            <person name="Clarke I.N."/>
        </authorList>
    </citation>
    <scope>NUCLEOTIDE SEQUENCE [LARGE SCALE GENOMIC DNA]</scope>
    <source>
        <strain>UCH-1/proctitis</strain>
    </source>
</reference>
<feature type="chain" id="PRO_1000091937" description="DNA-directed RNA polymerase subunit alpha">
    <location>
        <begin position="1"/>
        <end position="377"/>
    </location>
</feature>
<feature type="region of interest" description="Alpha N-terminal domain (alpha-NTD)" evidence="1">
    <location>
        <begin position="1"/>
        <end position="259"/>
    </location>
</feature>
<feature type="region of interest" description="Alpha C-terminal domain (alpha-CTD)" evidence="1">
    <location>
        <begin position="279"/>
        <end position="377"/>
    </location>
</feature>
<accession>B0BCE6</accession>